<protein>
    <recommendedName>
        <fullName evidence="1">Thiazole synthase</fullName>
        <ecNumber evidence="1">2.8.1.10</ecNumber>
    </recommendedName>
</protein>
<name>THIG_CYAM1</name>
<gene>
    <name evidence="1" type="primary">thiG</name>
</gene>
<accession>Q85G31</accession>
<keyword id="KW-0150">Chloroplast</keyword>
<keyword id="KW-0934">Plastid</keyword>
<keyword id="KW-1185">Reference proteome</keyword>
<keyword id="KW-0704">Schiff base</keyword>
<keyword id="KW-0784">Thiamine biosynthesis</keyword>
<keyword id="KW-0808">Transferase</keyword>
<geneLocation type="chloroplast"/>
<sequence length="258" mass="27715">MDSFCLHHYQFSSRLILGTGRYSSPSLAQQSIEASGCEIVTVAVRRFHALHAFTPLINWNRYWLLPNTAGCRTCSEAVRVALLARQLLQHLQQPHQCLIKLEVIPDPLYLLPDPLGTLKAAEILVRKGFAVLPYIYPDPVLALQLEQIGCAAVMPLASPIGSGQGIQHVHSLQLILQNARIPVIIDAGLALPSDASRVMEMGASAVLINSAIALSPSPVSMAHAMKLAVQAGRLAFLAGRMPLSSSAHASSASFGSFL</sequence>
<comment type="function">
    <text evidence="1">Catalyzes the rearrangement of 1-deoxy-D-xylulose 5-phosphate (DXP) to produce the thiazole phosphate moiety of thiamine. Sulfur is provided by the thiocarboxylate moiety of the carrier protein ThiS. In vitro, sulfur can be provided by H(2)S.</text>
</comment>
<comment type="catalytic activity">
    <reaction evidence="1">
        <text>[ThiS sulfur-carrier protein]-C-terminal-Gly-aminoethanethioate + 2-iminoacetate + 1-deoxy-D-xylulose 5-phosphate = [ThiS sulfur-carrier protein]-C-terminal Gly-Gly + 2-[(2R,5Z)-2-carboxy-4-methylthiazol-5(2H)-ylidene]ethyl phosphate + 2 H2O + H(+)</text>
        <dbReference type="Rhea" id="RHEA:26297"/>
        <dbReference type="Rhea" id="RHEA-COMP:12909"/>
        <dbReference type="Rhea" id="RHEA-COMP:19908"/>
        <dbReference type="ChEBI" id="CHEBI:15377"/>
        <dbReference type="ChEBI" id="CHEBI:15378"/>
        <dbReference type="ChEBI" id="CHEBI:57792"/>
        <dbReference type="ChEBI" id="CHEBI:62899"/>
        <dbReference type="ChEBI" id="CHEBI:77846"/>
        <dbReference type="ChEBI" id="CHEBI:90778"/>
        <dbReference type="ChEBI" id="CHEBI:232372"/>
        <dbReference type="EC" id="2.8.1.10"/>
    </reaction>
</comment>
<comment type="pathway">
    <text evidence="1">Cofactor biosynthesis; thiamine diphosphate biosynthesis.</text>
</comment>
<comment type="subunit">
    <text evidence="1">Homotetramer. Forms heterodimers with either ThiH or ThiS.</text>
</comment>
<comment type="subcellular location">
    <subcellularLocation>
        <location>Plastid</location>
        <location>Chloroplast</location>
    </subcellularLocation>
</comment>
<comment type="similarity">
    <text evidence="1">Belongs to the ThiG family.</text>
</comment>
<dbReference type="EC" id="2.8.1.10" evidence="1"/>
<dbReference type="EMBL" id="AB002583">
    <property type="protein sequence ID" value="BAC76160.1"/>
    <property type="molecule type" value="Genomic_DNA"/>
</dbReference>
<dbReference type="RefSeq" id="NP_848998.1">
    <property type="nucleotide sequence ID" value="NC_004799.1"/>
</dbReference>
<dbReference type="SMR" id="Q85G31"/>
<dbReference type="STRING" id="280699.Q85G31"/>
<dbReference type="EnsemblPlants" id="CMV077CT">
    <property type="protein sequence ID" value="CMV077CT"/>
    <property type="gene ID" value="CMV077C"/>
</dbReference>
<dbReference type="GeneID" id="845024"/>
<dbReference type="Gramene" id="CMV077CT">
    <property type="protein sequence ID" value="CMV077CT"/>
    <property type="gene ID" value="CMV077C"/>
</dbReference>
<dbReference type="KEGG" id="cme:CymeCp066"/>
<dbReference type="eggNOG" id="ENOG502RCR5">
    <property type="taxonomic scope" value="Eukaryota"/>
</dbReference>
<dbReference type="HOGENOM" id="CLU_062233_1_0_1"/>
<dbReference type="UniPathway" id="UPA00060"/>
<dbReference type="Proteomes" id="UP000007014">
    <property type="component" value="Chloroplast"/>
</dbReference>
<dbReference type="GO" id="GO:0009507">
    <property type="term" value="C:chloroplast"/>
    <property type="evidence" value="ECO:0007669"/>
    <property type="project" value="UniProtKB-SubCell"/>
</dbReference>
<dbReference type="GO" id="GO:1990107">
    <property type="term" value="F:thiazole synthase activity"/>
    <property type="evidence" value="ECO:0007669"/>
    <property type="project" value="UniProtKB-EC"/>
</dbReference>
<dbReference type="GO" id="GO:0009229">
    <property type="term" value="P:thiamine diphosphate biosynthetic process"/>
    <property type="evidence" value="ECO:0007669"/>
    <property type="project" value="UniProtKB-UniRule"/>
</dbReference>
<dbReference type="CDD" id="cd04728">
    <property type="entry name" value="ThiG"/>
    <property type="match status" value="1"/>
</dbReference>
<dbReference type="Gene3D" id="3.20.20.70">
    <property type="entry name" value="Aldolase class I"/>
    <property type="match status" value="1"/>
</dbReference>
<dbReference type="HAMAP" id="MF_00443">
    <property type="entry name" value="ThiG"/>
    <property type="match status" value="1"/>
</dbReference>
<dbReference type="InterPro" id="IPR013785">
    <property type="entry name" value="Aldolase_TIM"/>
</dbReference>
<dbReference type="InterPro" id="IPR033983">
    <property type="entry name" value="Thiazole_synthase_ThiG"/>
</dbReference>
<dbReference type="InterPro" id="IPR008867">
    <property type="entry name" value="ThiG"/>
</dbReference>
<dbReference type="PANTHER" id="PTHR34266">
    <property type="entry name" value="THIAZOLE SYNTHASE"/>
    <property type="match status" value="1"/>
</dbReference>
<dbReference type="PANTHER" id="PTHR34266:SF2">
    <property type="entry name" value="THIAZOLE SYNTHASE"/>
    <property type="match status" value="1"/>
</dbReference>
<dbReference type="Pfam" id="PF05690">
    <property type="entry name" value="ThiG"/>
    <property type="match status" value="1"/>
</dbReference>
<dbReference type="SUPFAM" id="SSF110399">
    <property type="entry name" value="ThiG-like"/>
    <property type="match status" value="1"/>
</dbReference>
<feature type="chain" id="PRO_0000162886" description="Thiazole synthase">
    <location>
        <begin position="1"/>
        <end position="258"/>
    </location>
</feature>
<feature type="active site" description="Schiff-base intermediate with DXP" evidence="1">
    <location>
        <position position="100"/>
    </location>
</feature>
<feature type="binding site" evidence="1">
    <location>
        <position position="161"/>
    </location>
    <ligand>
        <name>1-deoxy-D-xylulose 5-phosphate</name>
        <dbReference type="ChEBI" id="CHEBI:57792"/>
    </ligand>
</feature>
<feature type="binding site" evidence="1">
    <location>
        <begin position="187"/>
        <end position="188"/>
    </location>
    <ligand>
        <name>1-deoxy-D-xylulose 5-phosphate</name>
        <dbReference type="ChEBI" id="CHEBI:57792"/>
    </ligand>
</feature>
<feature type="binding site" evidence="1">
    <location>
        <begin position="209"/>
        <end position="210"/>
    </location>
    <ligand>
        <name>1-deoxy-D-xylulose 5-phosphate</name>
        <dbReference type="ChEBI" id="CHEBI:57792"/>
    </ligand>
</feature>
<proteinExistence type="inferred from homology"/>
<reference key="1">
    <citation type="journal article" date="2003" name="DNA Res.">
        <title>Complete sequence and analysis of the plastid genome of the unicellular red alga Cyanidioschyzon merolae.</title>
        <authorList>
            <person name="Ohta N."/>
            <person name="Matsuzaki M."/>
            <person name="Misumi O."/>
            <person name="Miyagishima S.-Y."/>
            <person name="Nozaki H."/>
            <person name="Tanaka K."/>
            <person name="Shin-i T."/>
            <person name="Kohara Y."/>
            <person name="Kuroiwa T."/>
        </authorList>
    </citation>
    <scope>NUCLEOTIDE SEQUENCE [LARGE SCALE GENOMIC DNA]</scope>
    <source>
        <strain>NIES-3377 / 10D</strain>
    </source>
</reference>
<evidence type="ECO:0000255" key="1">
    <source>
        <dbReference type="HAMAP-Rule" id="MF_00443"/>
    </source>
</evidence>
<organism>
    <name type="scientific">Cyanidioschyzon merolae (strain NIES-3377 / 10D)</name>
    <name type="common">Unicellular red alga</name>
    <dbReference type="NCBI Taxonomy" id="280699"/>
    <lineage>
        <taxon>Eukaryota</taxon>
        <taxon>Rhodophyta</taxon>
        <taxon>Bangiophyceae</taxon>
        <taxon>Cyanidiales</taxon>
        <taxon>Cyanidiaceae</taxon>
        <taxon>Cyanidioschyzon</taxon>
    </lineage>
</organism>